<evidence type="ECO:0000255" key="1"/>
<evidence type="ECO:0000269" key="2">
    <source>
    </source>
</evidence>
<evidence type="ECO:0000303" key="3">
    <source>
    </source>
</evidence>
<evidence type="ECO:0000305" key="4"/>
<evidence type="ECO:0000305" key="5">
    <source>
    </source>
</evidence>
<comment type="function">
    <text evidence="2">Toxin that causes a rapid and irreversible paralysis when intrathoracically injected into insects (blowflies). Does not cause spontaneous nocifensive behaviors by intraplantar injection in mice.</text>
</comment>
<comment type="subcellular location">
    <subcellularLocation>
        <location evidence="2">Secreted</location>
    </subcellularLocation>
</comment>
<comment type="tissue specificity">
    <text evidence="5">Expressed by the venom gland.</text>
</comment>
<comment type="toxic dose">
    <text evidence="2">PD(50) [1 hour] is 43.7 nmol/g when intrathoracically injected into insects (blowfly L.caesar).</text>
</comment>
<comment type="miscellaneous">
    <text evidence="2">Negative results: does not exhibit hemolytic and cytotoxic activities on HEK293 cells.</text>
</comment>
<comment type="similarity">
    <text evidence="4">Belongs to the formicidae venom clade 2 family.</text>
</comment>
<protein>
    <recommendedName>
        <fullName evidence="3">Myrmicitoxin(1)-Pm5a</fullName>
        <shortName evidence="3">MYRTX(1)-Pm5a</shortName>
    </recommendedName>
</protein>
<reference key="1">
    <citation type="journal article" date="2024" name="J. Biol. Chem.">
        <title>Peptide toxins that target vertebrate voltage-gated sodium channels underly the painful stings of harvester ants.</title>
        <authorList>
            <person name="Robinson S.D."/>
            <person name="Deuis J.R."/>
            <person name="Niu P."/>
            <person name="Touchard A."/>
            <person name="Mueller A."/>
            <person name="Schendel V."/>
            <person name="Brinkwirth N."/>
            <person name="King G.F."/>
            <person name="Vetter I."/>
            <person name="Schmidt J.O."/>
        </authorList>
    </citation>
    <scope>NUCLEOTIDE SEQUENCE [MRNA]</scope>
    <scope>IDENTIFICATION BY MASS SPECTROMETRY</scope>
    <scope>SUBCELLULAR LOCATION</scope>
    <scope>SYNTHESIS OF 34-60</scope>
    <scope>BIOASSAY</scope>
    <scope>TOXIC DOSE</scope>
    <scope>AMIDATION AT GLN-60</scope>
    <source>
        <tissue>Venom</tissue>
        <tissue>Venom gland</tissue>
    </source>
</reference>
<proteinExistence type="evidence at protein level"/>
<organism>
    <name type="scientific">Pogonomyrmex maricopa</name>
    <name type="common">Maricopa harvester ant</name>
    <dbReference type="NCBI Taxonomy" id="144040"/>
    <lineage>
        <taxon>Eukaryota</taxon>
        <taxon>Metazoa</taxon>
        <taxon>Ecdysozoa</taxon>
        <taxon>Arthropoda</taxon>
        <taxon>Hexapoda</taxon>
        <taxon>Insecta</taxon>
        <taxon>Pterygota</taxon>
        <taxon>Neoptera</taxon>
        <taxon>Endopterygota</taxon>
        <taxon>Hymenoptera</taxon>
        <taxon>Apocrita</taxon>
        <taxon>Aculeata</taxon>
        <taxon>Formicoidea</taxon>
        <taxon>Formicidae</taxon>
        <taxon>Myrmicinae</taxon>
        <taxon>Pogonomyrmex</taxon>
    </lineage>
</organism>
<sequence>MKAIIFLFAVLTVVAIIIPIISGEPNAGPLAASIDLKQIMEKVKPDLLKMLDDIKAKIQQG</sequence>
<keyword id="KW-0027">Amidation</keyword>
<keyword id="KW-0528">Neurotoxin</keyword>
<keyword id="KW-0964">Secreted</keyword>
<keyword id="KW-0732">Signal</keyword>
<keyword id="KW-0800">Toxin</keyword>
<name>TX5A_POGMA</name>
<feature type="signal peptide" evidence="1">
    <location>
        <begin position="1"/>
        <end position="23"/>
    </location>
</feature>
<feature type="propeptide" id="PRO_0000461255" evidence="5">
    <location>
        <begin position="24"/>
        <end position="33"/>
    </location>
</feature>
<feature type="peptide" id="PRO_0000461256" description="Myrmicitoxin(1)-Pm5a" evidence="2">
    <location>
        <begin position="34"/>
        <end position="60"/>
    </location>
</feature>
<feature type="modified residue" description="Glutamine amide" evidence="2">
    <location>
        <position position="60"/>
    </location>
</feature>
<dbReference type="EMBL" id="OR128464">
    <property type="protein sequence ID" value="WMI02502.1"/>
    <property type="molecule type" value="mRNA"/>
</dbReference>
<dbReference type="GO" id="GO:0005576">
    <property type="term" value="C:extracellular region"/>
    <property type="evidence" value="ECO:0007669"/>
    <property type="project" value="UniProtKB-SubCell"/>
</dbReference>
<dbReference type="GO" id="GO:0090729">
    <property type="term" value="F:toxin activity"/>
    <property type="evidence" value="ECO:0007669"/>
    <property type="project" value="UniProtKB-KW"/>
</dbReference>
<accession>P0DRD4</accession>